<gene>
    <name evidence="1" type="primary">atpA</name>
    <name type="ordered locus">FP2458</name>
</gene>
<sequence>MAEIKPAEISAILKKQVEGFESGATLEEVGSVLQVGDGIARIYGLSNVQYGELVEFDNGLEGIVLNLEEDNVGVVLLGASTGIKEGSTAKRTQRIASLKVGEQMVGRVVNTLGFPIDGKGPIGGDLYEMPLERKAPGVIFRQPVTEPLQTGIKAVDAMIPVGRGQRELVIGDRQTGKSTVCIDTILNQKEFYDAGKPVFCIYVAIGQKASTVAGIAKMLEEKGAMAYTVIVAANASDPAPMQVYAPMAGAAIGEYFRDSGRPALIVYDDLSKQAVAYREVSLLLRRPPGREAYPGDVFYLHSRLLERACKVIADDDIAKNMNDLPDSLKSIVKGGGSLTALPIIETQAGDVSAYIPTNVISITDGQIFLDGDLFNSGVRPAINVGISVSRVGGNAQIKSMKKVAGTLKLDQAQFRELEAFAKFGSDLDAVTLNVIEKGKRNVEILKQGLNSPYTVEDQVAIIYAGSKNLLKNVPVNKVREFEKDFIEYLNNKHRDTLDALKAGKLDDKITDVIEATAKELSAKYN</sequence>
<name>ATPA_FLAPJ</name>
<accession>A6H2D7</accession>
<evidence type="ECO:0000255" key="1">
    <source>
        <dbReference type="HAMAP-Rule" id="MF_01346"/>
    </source>
</evidence>
<protein>
    <recommendedName>
        <fullName evidence="1">ATP synthase subunit alpha</fullName>
        <ecNumber evidence="1">7.1.2.2</ecNumber>
    </recommendedName>
    <alternativeName>
        <fullName evidence="1">ATP synthase F1 sector subunit alpha</fullName>
    </alternativeName>
    <alternativeName>
        <fullName evidence="1">F-ATPase subunit alpha</fullName>
    </alternativeName>
</protein>
<proteinExistence type="inferred from homology"/>
<feature type="chain" id="PRO_1000073354" description="ATP synthase subunit alpha">
    <location>
        <begin position="1"/>
        <end position="525"/>
    </location>
</feature>
<feature type="binding site" evidence="1">
    <location>
        <begin position="171"/>
        <end position="178"/>
    </location>
    <ligand>
        <name>ATP</name>
        <dbReference type="ChEBI" id="CHEBI:30616"/>
    </ligand>
</feature>
<feature type="site" description="Required for activity" evidence="1">
    <location>
        <position position="387"/>
    </location>
</feature>
<dbReference type="EC" id="7.1.2.2" evidence="1"/>
<dbReference type="EMBL" id="AM398681">
    <property type="protein sequence ID" value="CAL44511.1"/>
    <property type="molecule type" value="Genomic_DNA"/>
</dbReference>
<dbReference type="RefSeq" id="WP_011964545.1">
    <property type="nucleotide sequence ID" value="NC_009613.3"/>
</dbReference>
<dbReference type="RefSeq" id="YP_001297312.1">
    <property type="nucleotide sequence ID" value="NC_009613.3"/>
</dbReference>
<dbReference type="SMR" id="A6H2D7"/>
<dbReference type="STRING" id="402612.FP2458"/>
<dbReference type="EnsemblBacteria" id="CAL44511">
    <property type="protein sequence ID" value="CAL44511"/>
    <property type="gene ID" value="FP2458"/>
</dbReference>
<dbReference type="GeneID" id="66553568"/>
<dbReference type="KEGG" id="fps:FP2458"/>
<dbReference type="PATRIC" id="fig|402612.5.peg.2516"/>
<dbReference type="eggNOG" id="COG0056">
    <property type="taxonomic scope" value="Bacteria"/>
</dbReference>
<dbReference type="HOGENOM" id="CLU_010091_2_1_10"/>
<dbReference type="OrthoDB" id="9803053at2"/>
<dbReference type="Proteomes" id="UP000006394">
    <property type="component" value="Chromosome"/>
</dbReference>
<dbReference type="GO" id="GO:0005886">
    <property type="term" value="C:plasma membrane"/>
    <property type="evidence" value="ECO:0007669"/>
    <property type="project" value="UniProtKB-SubCell"/>
</dbReference>
<dbReference type="GO" id="GO:0045259">
    <property type="term" value="C:proton-transporting ATP synthase complex"/>
    <property type="evidence" value="ECO:0007669"/>
    <property type="project" value="UniProtKB-KW"/>
</dbReference>
<dbReference type="GO" id="GO:0043531">
    <property type="term" value="F:ADP binding"/>
    <property type="evidence" value="ECO:0007669"/>
    <property type="project" value="TreeGrafter"/>
</dbReference>
<dbReference type="GO" id="GO:0005524">
    <property type="term" value="F:ATP binding"/>
    <property type="evidence" value="ECO:0007669"/>
    <property type="project" value="UniProtKB-UniRule"/>
</dbReference>
<dbReference type="GO" id="GO:0046933">
    <property type="term" value="F:proton-transporting ATP synthase activity, rotational mechanism"/>
    <property type="evidence" value="ECO:0007669"/>
    <property type="project" value="UniProtKB-UniRule"/>
</dbReference>
<dbReference type="CDD" id="cd18113">
    <property type="entry name" value="ATP-synt_F1_alpha_C"/>
    <property type="match status" value="1"/>
</dbReference>
<dbReference type="CDD" id="cd18116">
    <property type="entry name" value="ATP-synt_F1_alpha_N"/>
    <property type="match status" value="1"/>
</dbReference>
<dbReference type="CDD" id="cd01132">
    <property type="entry name" value="F1-ATPase_alpha_CD"/>
    <property type="match status" value="1"/>
</dbReference>
<dbReference type="FunFam" id="1.20.150.20:FF:000001">
    <property type="entry name" value="ATP synthase subunit alpha"/>
    <property type="match status" value="1"/>
</dbReference>
<dbReference type="FunFam" id="2.40.30.20:FF:000001">
    <property type="entry name" value="ATP synthase subunit alpha"/>
    <property type="match status" value="1"/>
</dbReference>
<dbReference type="FunFam" id="3.40.50.300:FF:000002">
    <property type="entry name" value="ATP synthase subunit alpha"/>
    <property type="match status" value="1"/>
</dbReference>
<dbReference type="Gene3D" id="2.40.30.20">
    <property type="match status" value="1"/>
</dbReference>
<dbReference type="Gene3D" id="1.20.150.20">
    <property type="entry name" value="ATP synthase alpha/beta chain, C-terminal domain"/>
    <property type="match status" value="1"/>
</dbReference>
<dbReference type="Gene3D" id="3.40.50.300">
    <property type="entry name" value="P-loop containing nucleotide triphosphate hydrolases"/>
    <property type="match status" value="1"/>
</dbReference>
<dbReference type="HAMAP" id="MF_01346">
    <property type="entry name" value="ATP_synth_alpha_bact"/>
    <property type="match status" value="1"/>
</dbReference>
<dbReference type="InterPro" id="IPR023366">
    <property type="entry name" value="ATP_synth_asu-like_sf"/>
</dbReference>
<dbReference type="InterPro" id="IPR000793">
    <property type="entry name" value="ATP_synth_asu_C"/>
</dbReference>
<dbReference type="InterPro" id="IPR038376">
    <property type="entry name" value="ATP_synth_asu_C_sf"/>
</dbReference>
<dbReference type="InterPro" id="IPR033732">
    <property type="entry name" value="ATP_synth_F1_a_nt-bd_dom"/>
</dbReference>
<dbReference type="InterPro" id="IPR005294">
    <property type="entry name" value="ATP_synth_F1_asu"/>
</dbReference>
<dbReference type="InterPro" id="IPR020003">
    <property type="entry name" value="ATPase_a/bsu_AS"/>
</dbReference>
<dbReference type="InterPro" id="IPR004100">
    <property type="entry name" value="ATPase_F1/V1/A1_a/bsu_N"/>
</dbReference>
<dbReference type="InterPro" id="IPR036121">
    <property type="entry name" value="ATPase_F1/V1/A1_a/bsu_N_sf"/>
</dbReference>
<dbReference type="InterPro" id="IPR000194">
    <property type="entry name" value="ATPase_F1/V1/A1_a/bsu_nucl-bd"/>
</dbReference>
<dbReference type="InterPro" id="IPR027417">
    <property type="entry name" value="P-loop_NTPase"/>
</dbReference>
<dbReference type="NCBIfam" id="TIGR00962">
    <property type="entry name" value="atpA"/>
    <property type="match status" value="1"/>
</dbReference>
<dbReference type="NCBIfam" id="NF009884">
    <property type="entry name" value="PRK13343.1"/>
    <property type="match status" value="1"/>
</dbReference>
<dbReference type="PANTHER" id="PTHR48082">
    <property type="entry name" value="ATP SYNTHASE SUBUNIT ALPHA, MITOCHONDRIAL"/>
    <property type="match status" value="1"/>
</dbReference>
<dbReference type="PANTHER" id="PTHR48082:SF2">
    <property type="entry name" value="ATP SYNTHASE SUBUNIT ALPHA, MITOCHONDRIAL"/>
    <property type="match status" value="1"/>
</dbReference>
<dbReference type="Pfam" id="PF00006">
    <property type="entry name" value="ATP-synt_ab"/>
    <property type="match status" value="1"/>
</dbReference>
<dbReference type="Pfam" id="PF00306">
    <property type="entry name" value="ATP-synt_ab_C"/>
    <property type="match status" value="1"/>
</dbReference>
<dbReference type="Pfam" id="PF02874">
    <property type="entry name" value="ATP-synt_ab_N"/>
    <property type="match status" value="1"/>
</dbReference>
<dbReference type="PIRSF" id="PIRSF039088">
    <property type="entry name" value="F_ATPase_subunit_alpha"/>
    <property type="match status" value="1"/>
</dbReference>
<dbReference type="SUPFAM" id="SSF47917">
    <property type="entry name" value="C-terminal domain of alpha and beta subunits of F1 ATP synthase"/>
    <property type="match status" value="1"/>
</dbReference>
<dbReference type="SUPFAM" id="SSF50615">
    <property type="entry name" value="N-terminal domain of alpha and beta subunits of F1 ATP synthase"/>
    <property type="match status" value="1"/>
</dbReference>
<dbReference type="SUPFAM" id="SSF52540">
    <property type="entry name" value="P-loop containing nucleoside triphosphate hydrolases"/>
    <property type="match status" value="1"/>
</dbReference>
<dbReference type="PROSITE" id="PS00152">
    <property type="entry name" value="ATPASE_ALPHA_BETA"/>
    <property type="match status" value="1"/>
</dbReference>
<organism>
    <name type="scientific">Flavobacterium psychrophilum (strain ATCC 49511 / DSM 21280 / CIP 103535 / JIP02/86)</name>
    <dbReference type="NCBI Taxonomy" id="402612"/>
    <lineage>
        <taxon>Bacteria</taxon>
        <taxon>Pseudomonadati</taxon>
        <taxon>Bacteroidota</taxon>
        <taxon>Flavobacteriia</taxon>
        <taxon>Flavobacteriales</taxon>
        <taxon>Flavobacteriaceae</taxon>
        <taxon>Flavobacterium</taxon>
    </lineage>
</organism>
<keyword id="KW-0066">ATP synthesis</keyword>
<keyword id="KW-0067">ATP-binding</keyword>
<keyword id="KW-0997">Cell inner membrane</keyword>
<keyword id="KW-1003">Cell membrane</keyword>
<keyword id="KW-0139">CF(1)</keyword>
<keyword id="KW-0375">Hydrogen ion transport</keyword>
<keyword id="KW-0406">Ion transport</keyword>
<keyword id="KW-0472">Membrane</keyword>
<keyword id="KW-0547">Nucleotide-binding</keyword>
<keyword id="KW-1185">Reference proteome</keyword>
<keyword id="KW-1278">Translocase</keyword>
<keyword id="KW-0813">Transport</keyword>
<comment type="function">
    <text evidence="1">Produces ATP from ADP in the presence of a proton gradient across the membrane. The alpha chain is a regulatory subunit.</text>
</comment>
<comment type="catalytic activity">
    <reaction evidence="1">
        <text>ATP + H2O + 4 H(+)(in) = ADP + phosphate + 5 H(+)(out)</text>
        <dbReference type="Rhea" id="RHEA:57720"/>
        <dbReference type="ChEBI" id="CHEBI:15377"/>
        <dbReference type="ChEBI" id="CHEBI:15378"/>
        <dbReference type="ChEBI" id="CHEBI:30616"/>
        <dbReference type="ChEBI" id="CHEBI:43474"/>
        <dbReference type="ChEBI" id="CHEBI:456216"/>
        <dbReference type="EC" id="7.1.2.2"/>
    </reaction>
</comment>
<comment type="subunit">
    <text evidence="1">F-type ATPases have 2 components, CF(1) - the catalytic core - and CF(0) - the membrane proton channel. CF(1) has five subunits: alpha(3), beta(3), gamma(1), delta(1), epsilon(1). CF(0) has three main subunits: a(1), b(2) and c(9-12). The alpha and beta chains form an alternating ring which encloses part of the gamma chain. CF(1) is attached to CF(0) by a central stalk formed by the gamma and epsilon chains, while a peripheral stalk is formed by the delta and b chains.</text>
</comment>
<comment type="subcellular location">
    <subcellularLocation>
        <location evidence="1">Cell inner membrane</location>
        <topology evidence="1">Peripheral membrane protein</topology>
    </subcellularLocation>
</comment>
<comment type="similarity">
    <text evidence="1">Belongs to the ATPase alpha/beta chains family.</text>
</comment>
<reference key="1">
    <citation type="journal article" date="2007" name="Nat. Biotechnol.">
        <title>Complete genome sequence of the fish pathogen Flavobacterium psychrophilum.</title>
        <authorList>
            <person name="Duchaud E."/>
            <person name="Boussaha M."/>
            <person name="Loux V."/>
            <person name="Bernardet J.-F."/>
            <person name="Michel C."/>
            <person name="Kerouault B."/>
            <person name="Mondot S."/>
            <person name="Nicolas P."/>
            <person name="Bossy R."/>
            <person name="Caron C."/>
            <person name="Bessieres P."/>
            <person name="Gibrat J.-F."/>
            <person name="Claverol S."/>
            <person name="Dumetz F."/>
            <person name="Le Henaff M."/>
            <person name="Benmansour A."/>
        </authorList>
    </citation>
    <scope>NUCLEOTIDE SEQUENCE [LARGE SCALE GENOMIC DNA]</scope>
    <source>
        <strain>ATCC 49511 / DSM 21280 / CIP 103535 / JIP02/86</strain>
    </source>
</reference>